<keyword id="KW-0028">Amino-acid biosynthesis</keyword>
<keyword id="KW-0100">Branched-chain amino acid biosynthesis</keyword>
<keyword id="KW-0460">Magnesium</keyword>
<keyword id="KW-0479">Metal-binding</keyword>
<keyword id="KW-0521">NADP</keyword>
<keyword id="KW-0560">Oxidoreductase</keyword>
<name>ILVC_BURVG</name>
<proteinExistence type="inferred from homology"/>
<comment type="function">
    <text evidence="1">Involved in the biosynthesis of branched-chain amino acids (BCAA). Catalyzes an alkyl-migration followed by a ketol-acid reduction of (S)-2-acetolactate (S2AL) to yield (R)-2,3-dihydroxy-isovalerate. In the isomerase reaction, S2AL is rearranged via a Mg-dependent methyl migration to produce 3-hydroxy-3-methyl-2-ketobutyrate (HMKB). In the reductase reaction, this 2-ketoacid undergoes a metal-dependent reduction by NADPH to yield (R)-2,3-dihydroxy-isovalerate.</text>
</comment>
<comment type="catalytic activity">
    <reaction evidence="1">
        <text>(2R)-2,3-dihydroxy-3-methylbutanoate + NADP(+) = (2S)-2-acetolactate + NADPH + H(+)</text>
        <dbReference type="Rhea" id="RHEA:22068"/>
        <dbReference type="ChEBI" id="CHEBI:15378"/>
        <dbReference type="ChEBI" id="CHEBI:49072"/>
        <dbReference type="ChEBI" id="CHEBI:57783"/>
        <dbReference type="ChEBI" id="CHEBI:58349"/>
        <dbReference type="ChEBI" id="CHEBI:58476"/>
        <dbReference type="EC" id="1.1.1.86"/>
    </reaction>
</comment>
<comment type="catalytic activity">
    <reaction evidence="1">
        <text>(2R,3R)-2,3-dihydroxy-3-methylpentanoate + NADP(+) = (S)-2-ethyl-2-hydroxy-3-oxobutanoate + NADPH + H(+)</text>
        <dbReference type="Rhea" id="RHEA:13493"/>
        <dbReference type="ChEBI" id="CHEBI:15378"/>
        <dbReference type="ChEBI" id="CHEBI:49256"/>
        <dbReference type="ChEBI" id="CHEBI:49258"/>
        <dbReference type="ChEBI" id="CHEBI:57783"/>
        <dbReference type="ChEBI" id="CHEBI:58349"/>
        <dbReference type="EC" id="1.1.1.86"/>
    </reaction>
</comment>
<comment type="cofactor">
    <cofactor evidence="1">
        <name>Mg(2+)</name>
        <dbReference type="ChEBI" id="CHEBI:18420"/>
    </cofactor>
    <text evidence="1">Binds 2 magnesium ions per subunit.</text>
</comment>
<comment type="pathway">
    <text evidence="1">Amino-acid biosynthesis; L-isoleucine biosynthesis; L-isoleucine from 2-oxobutanoate: step 2/4.</text>
</comment>
<comment type="pathway">
    <text evidence="1">Amino-acid biosynthesis; L-valine biosynthesis; L-valine from pyruvate: step 2/4.</text>
</comment>
<comment type="similarity">
    <text evidence="1">Belongs to the ketol-acid reductoisomerase family.</text>
</comment>
<dbReference type="EC" id="1.1.1.86" evidence="1"/>
<dbReference type="EMBL" id="CP000614">
    <property type="protein sequence ID" value="ABO55346.1"/>
    <property type="molecule type" value="Genomic_DNA"/>
</dbReference>
<dbReference type="SMR" id="A4JGE3"/>
<dbReference type="KEGG" id="bvi:Bcep1808_2347"/>
<dbReference type="eggNOG" id="COG0059">
    <property type="taxonomic scope" value="Bacteria"/>
</dbReference>
<dbReference type="HOGENOM" id="CLU_033821_0_1_4"/>
<dbReference type="UniPathway" id="UPA00047">
    <property type="reaction ID" value="UER00056"/>
</dbReference>
<dbReference type="UniPathway" id="UPA00049">
    <property type="reaction ID" value="UER00060"/>
</dbReference>
<dbReference type="Proteomes" id="UP000002287">
    <property type="component" value="Chromosome 1"/>
</dbReference>
<dbReference type="GO" id="GO:0005829">
    <property type="term" value="C:cytosol"/>
    <property type="evidence" value="ECO:0007669"/>
    <property type="project" value="TreeGrafter"/>
</dbReference>
<dbReference type="GO" id="GO:0004455">
    <property type="term" value="F:ketol-acid reductoisomerase activity"/>
    <property type="evidence" value="ECO:0007669"/>
    <property type="project" value="UniProtKB-UniRule"/>
</dbReference>
<dbReference type="GO" id="GO:0000287">
    <property type="term" value="F:magnesium ion binding"/>
    <property type="evidence" value="ECO:0007669"/>
    <property type="project" value="UniProtKB-UniRule"/>
</dbReference>
<dbReference type="GO" id="GO:0050661">
    <property type="term" value="F:NADP binding"/>
    <property type="evidence" value="ECO:0007669"/>
    <property type="project" value="InterPro"/>
</dbReference>
<dbReference type="GO" id="GO:0009097">
    <property type="term" value="P:isoleucine biosynthetic process"/>
    <property type="evidence" value="ECO:0007669"/>
    <property type="project" value="UniProtKB-UniRule"/>
</dbReference>
<dbReference type="GO" id="GO:0009099">
    <property type="term" value="P:L-valine biosynthetic process"/>
    <property type="evidence" value="ECO:0007669"/>
    <property type="project" value="UniProtKB-UniRule"/>
</dbReference>
<dbReference type="FunFam" id="3.40.50.720:FF:000023">
    <property type="entry name" value="Ketol-acid reductoisomerase (NADP(+))"/>
    <property type="match status" value="1"/>
</dbReference>
<dbReference type="Gene3D" id="6.10.240.10">
    <property type="match status" value="1"/>
</dbReference>
<dbReference type="Gene3D" id="3.40.50.720">
    <property type="entry name" value="NAD(P)-binding Rossmann-like Domain"/>
    <property type="match status" value="1"/>
</dbReference>
<dbReference type="HAMAP" id="MF_00435">
    <property type="entry name" value="IlvC"/>
    <property type="match status" value="1"/>
</dbReference>
<dbReference type="InterPro" id="IPR008927">
    <property type="entry name" value="6-PGluconate_DH-like_C_sf"/>
</dbReference>
<dbReference type="InterPro" id="IPR013023">
    <property type="entry name" value="KARI"/>
</dbReference>
<dbReference type="InterPro" id="IPR000506">
    <property type="entry name" value="KARI_C"/>
</dbReference>
<dbReference type="InterPro" id="IPR013116">
    <property type="entry name" value="KARI_N"/>
</dbReference>
<dbReference type="InterPro" id="IPR014359">
    <property type="entry name" value="KARI_prok"/>
</dbReference>
<dbReference type="InterPro" id="IPR036291">
    <property type="entry name" value="NAD(P)-bd_dom_sf"/>
</dbReference>
<dbReference type="NCBIfam" id="TIGR00465">
    <property type="entry name" value="ilvC"/>
    <property type="match status" value="1"/>
</dbReference>
<dbReference type="NCBIfam" id="NF004017">
    <property type="entry name" value="PRK05479.1"/>
    <property type="match status" value="1"/>
</dbReference>
<dbReference type="NCBIfam" id="NF009940">
    <property type="entry name" value="PRK13403.1"/>
    <property type="match status" value="1"/>
</dbReference>
<dbReference type="PANTHER" id="PTHR21371">
    <property type="entry name" value="KETOL-ACID REDUCTOISOMERASE, MITOCHONDRIAL"/>
    <property type="match status" value="1"/>
</dbReference>
<dbReference type="PANTHER" id="PTHR21371:SF1">
    <property type="entry name" value="KETOL-ACID REDUCTOISOMERASE, MITOCHONDRIAL"/>
    <property type="match status" value="1"/>
</dbReference>
<dbReference type="Pfam" id="PF01450">
    <property type="entry name" value="KARI_C"/>
    <property type="match status" value="1"/>
</dbReference>
<dbReference type="Pfam" id="PF07991">
    <property type="entry name" value="KARI_N"/>
    <property type="match status" value="1"/>
</dbReference>
<dbReference type="PIRSF" id="PIRSF000116">
    <property type="entry name" value="IlvC_gammaproteo"/>
    <property type="match status" value="1"/>
</dbReference>
<dbReference type="SUPFAM" id="SSF48179">
    <property type="entry name" value="6-phosphogluconate dehydrogenase C-terminal domain-like"/>
    <property type="match status" value="1"/>
</dbReference>
<dbReference type="SUPFAM" id="SSF51735">
    <property type="entry name" value="NAD(P)-binding Rossmann-fold domains"/>
    <property type="match status" value="1"/>
</dbReference>
<dbReference type="PROSITE" id="PS51851">
    <property type="entry name" value="KARI_C"/>
    <property type="match status" value="1"/>
</dbReference>
<dbReference type="PROSITE" id="PS51850">
    <property type="entry name" value="KARI_N"/>
    <property type="match status" value="1"/>
</dbReference>
<protein>
    <recommendedName>
        <fullName evidence="1">Ketol-acid reductoisomerase (NADP(+))</fullName>
        <shortName evidence="1">KARI</shortName>
        <ecNumber evidence="1">1.1.1.86</ecNumber>
    </recommendedName>
    <alternativeName>
        <fullName evidence="1">Acetohydroxy-acid isomeroreductase</fullName>
        <shortName evidence="1">AHIR</shortName>
    </alternativeName>
    <alternativeName>
        <fullName evidence="1">Alpha-keto-beta-hydroxylacyl reductoisomerase</fullName>
    </alternativeName>
    <alternativeName>
        <fullName evidence="1">Ketol-acid reductoisomerase type 1</fullName>
    </alternativeName>
    <alternativeName>
        <fullName evidence="1">Ketol-acid reductoisomerase type I</fullName>
    </alternativeName>
</protein>
<accession>A4JGE3</accession>
<reference key="1">
    <citation type="submission" date="2007-03" db="EMBL/GenBank/DDBJ databases">
        <title>Complete sequence of chromosome 1 of Burkholderia vietnamiensis G4.</title>
        <authorList>
            <consortium name="US DOE Joint Genome Institute"/>
            <person name="Copeland A."/>
            <person name="Lucas S."/>
            <person name="Lapidus A."/>
            <person name="Barry K."/>
            <person name="Detter J.C."/>
            <person name="Glavina del Rio T."/>
            <person name="Hammon N."/>
            <person name="Israni S."/>
            <person name="Dalin E."/>
            <person name="Tice H."/>
            <person name="Pitluck S."/>
            <person name="Chain P."/>
            <person name="Malfatti S."/>
            <person name="Shin M."/>
            <person name="Vergez L."/>
            <person name="Schmutz J."/>
            <person name="Larimer F."/>
            <person name="Land M."/>
            <person name="Hauser L."/>
            <person name="Kyrpides N."/>
            <person name="Tiedje J."/>
            <person name="Richardson P."/>
        </authorList>
    </citation>
    <scope>NUCLEOTIDE SEQUENCE [LARGE SCALE GENOMIC DNA]</scope>
    <source>
        <strain>G4 / LMG 22486</strain>
    </source>
</reference>
<gene>
    <name evidence="1" type="primary">ilvC</name>
    <name type="ordered locus">Bcep1808_2347</name>
</gene>
<sequence length="338" mass="36311">MNVFYDKDADLSLIKGKQVTIIGYGSQGHAHALNLKDSGVNVTVGLRKGGASWSKAENAGLSVKEVAEAVKGADVVMMLLPDEQIADVYAKEVHANIKQGAALAFAHGFNVHYGQVIPRADLDVIMIAPKAPGHTVRGTYSQGGGVPHLIAVAQNKSGAARDIALSYAAANGGGRAGIIETNFREETETDLFGEQAVLCGGTVELIKAGFETLVEAGYAPEMAYFECLHELKLIVDLIYEGGIANMNYSISNNAEYGEYVTGPRVVTEETKKAMKQCLTDIQTGEYAKSFILENKAGAPTLQSRRRLTAEHQIEQVGAKLRAMMPWIAKNKLVDQTKN</sequence>
<evidence type="ECO:0000255" key="1">
    <source>
        <dbReference type="HAMAP-Rule" id="MF_00435"/>
    </source>
</evidence>
<evidence type="ECO:0000255" key="2">
    <source>
        <dbReference type="PROSITE-ProRule" id="PRU01197"/>
    </source>
</evidence>
<evidence type="ECO:0000255" key="3">
    <source>
        <dbReference type="PROSITE-ProRule" id="PRU01198"/>
    </source>
</evidence>
<organism>
    <name type="scientific">Burkholderia vietnamiensis (strain G4 / LMG 22486)</name>
    <name type="common">Burkholderia cepacia (strain R1808)</name>
    <dbReference type="NCBI Taxonomy" id="269482"/>
    <lineage>
        <taxon>Bacteria</taxon>
        <taxon>Pseudomonadati</taxon>
        <taxon>Pseudomonadota</taxon>
        <taxon>Betaproteobacteria</taxon>
        <taxon>Burkholderiales</taxon>
        <taxon>Burkholderiaceae</taxon>
        <taxon>Burkholderia</taxon>
        <taxon>Burkholderia cepacia complex</taxon>
    </lineage>
</organism>
<feature type="chain" id="PRO_1000050491" description="Ketol-acid reductoisomerase (NADP(+))">
    <location>
        <begin position="1"/>
        <end position="338"/>
    </location>
</feature>
<feature type="domain" description="KARI N-terminal Rossmann" evidence="2">
    <location>
        <begin position="1"/>
        <end position="181"/>
    </location>
</feature>
<feature type="domain" description="KARI C-terminal knotted" evidence="3">
    <location>
        <begin position="182"/>
        <end position="327"/>
    </location>
</feature>
<feature type="active site" evidence="1">
    <location>
        <position position="107"/>
    </location>
</feature>
<feature type="binding site" evidence="1">
    <location>
        <begin position="24"/>
        <end position="27"/>
    </location>
    <ligand>
        <name>NADP(+)</name>
        <dbReference type="ChEBI" id="CHEBI:58349"/>
    </ligand>
</feature>
<feature type="binding site" evidence="1">
    <location>
        <position position="47"/>
    </location>
    <ligand>
        <name>NADP(+)</name>
        <dbReference type="ChEBI" id="CHEBI:58349"/>
    </ligand>
</feature>
<feature type="binding site" evidence="1">
    <location>
        <position position="52"/>
    </location>
    <ligand>
        <name>NADP(+)</name>
        <dbReference type="ChEBI" id="CHEBI:58349"/>
    </ligand>
</feature>
<feature type="binding site" evidence="1">
    <location>
        <position position="133"/>
    </location>
    <ligand>
        <name>NADP(+)</name>
        <dbReference type="ChEBI" id="CHEBI:58349"/>
    </ligand>
</feature>
<feature type="binding site" evidence="1">
    <location>
        <position position="190"/>
    </location>
    <ligand>
        <name>Mg(2+)</name>
        <dbReference type="ChEBI" id="CHEBI:18420"/>
        <label>1</label>
    </ligand>
</feature>
<feature type="binding site" evidence="1">
    <location>
        <position position="190"/>
    </location>
    <ligand>
        <name>Mg(2+)</name>
        <dbReference type="ChEBI" id="CHEBI:18420"/>
        <label>2</label>
    </ligand>
</feature>
<feature type="binding site" evidence="1">
    <location>
        <position position="194"/>
    </location>
    <ligand>
        <name>Mg(2+)</name>
        <dbReference type="ChEBI" id="CHEBI:18420"/>
        <label>1</label>
    </ligand>
</feature>
<feature type="binding site" evidence="1">
    <location>
        <position position="226"/>
    </location>
    <ligand>
        <name>Mg(2+)</name>
        <dbReference type="ChEBI" id="CHEBI:18420"/>
        <label>2</label>
    </ligand>
</feature>
<feature type="binding site" evidence="1">
    <location>
        <position position="230"/>
    </location>
    <ligand>
        <name>Mg(2+)</name>
        <dbReference type="ChEBI" id="CHEBI:18420"/>
        <label>2</label>
    </ligand>
</feature>
<feature type="binding site" evidence="1">
    <location>
        <position position="251"/>
    </location>
    <ligand>
        <name>substrate</name>
    </ligand>
</feature>